<name>GLPK_LEPCP</name>
<reference key="1">
    <citation type="submission" date="2008-03" db="EMBL/GenBank/DDBJ databases">
        <title>Complete sequence of Leptothrix cholodnii SP-6.</title>
        <authorList>
            <consortium name="US DOE Joint Genome Institute"/>
            <person name="Copeland A."/>
            <person name="Lucas S."/>
            <person name="Lapidus A."/>
            <person name="Glavina del Rio T."/>
            <person name="Dalin E."/>
            <person name="Tice H."/>
            <person name="Bruce D."/>
            <person name="Goodwin L."/>
            <person name="Pitluck S."/>
            <person name="Chertkov O."/>
            <person name="Brettin T."/>
            <person name="Detter J.C."/>
            <person name="Han C."/>
            <person name="Kuske C.R."/>
            <person name="Schmutz J."/>
            <person name="Larimer F."/>
            <person name="Land M."/>
            <person name="Hauser L."/>
            <person name="Kyrpides N."/>
            <person name="Lykidis A."/>
            <person name="Emerson D."/>
            <person name="Richardson P."/>
        </authorList>
    </citation>
    <scope>NUCLEOTIDE SEQUENCE [LARGE SCALE GENOMIC DNA]</scope>
    <source>
        <strain>ATCC 51168 / LMG 8142 / SP-6</strain>
    </source>
</reference>
<sequence>MSFLLALDQGTSSSRSIVFDIEGRPVAMAQRELRQIYPQPGWVEHDPIEIRDSQLATAREAIARAGISAHDIRAVGITNQRETTLLWNRRTGAPLHNAIVWQDRRTEPICAALRERGAEALVRQRTGLLIDPYFSGTKLQWLLDHVPGAREQAARGELAFGTVDAWLVWQLTGGRVHATDVTNASRTLLFDVHANRWDDELLSLLDVPHELLPAVFPSSHLYGETDAGLLGAALPIAGIAGDQQSALFGQACFKPGLAKNTYGTGCFLLMHNGDRFQSSANGLVTTAAAQTGPQPQFAIEGSVFVGGAVVQWLRDGLRAIDSASAVQALAQSVPDSGGVVFVPAFTGLGAPYWKPDARGAIVGLSRGTTLGHIARAALESIAYQSAALLAAMGRDAQACGGAAVTELRVDGGACVNDLLMQFQADLLGVPVVRPQVIETTARGAAFLAGLSTGVYRGLDELEALWQPERTFHPTLPPGRASELMAQWEHAVRQTVAS</sequence>
<protein>
    <recommendedName>
        <fullName evidence="1">Glycerol kinase</fullName>
        <ecNumber evidence="1">2.7.1.30</ecNumber>
    </recommendedName>
    <alternativeName>
        <fullName evidence="1">ATP:glycerol 3-phosphotransferase</fullName>
    </alternativeName>
    <alternativeName>
        <fullName evidence="1">Glycerokinase</fullName>
        <shortName evidence="1">GK</shortName>
    </alternativeName>
</protein>
<evidence type="ECO:0000255" key="1">
    <source>
        <dbReference type="HAMAP-Rule" id="MF_00186"/>
    </source>
</evidence>
<accession>B1Y1L9</accession>
<feature type="chain" id="PRO_1000098741" description="Glycerol kinase">
    <location>
        <begin position="1"/>
        <end position="497"/>
    </location>
</feature>
<feature type="binding site" evidence="1">
    <location>
        <position position="11"/>
    </location>
    <ligand>
        <name>ADP</name>
        <dbReference type="ChEBI" id="CHEBI:456216"/>
    </ligand>
</feature>
<feature type="binding site" evidence="1">
    <location>
        <position position="11"/>
    </location>
    <ligand>
        <name>ATP</name>
        <dbReference type="ChEBI" id="CHEBI:30616"/>
    </ligand>
</feature>
<feature type="binding site" evidence="1">
    <location>
        <position position="11"/>
    </location>
    <ligand>
        <name>sn-glycerol 3-phosphate</name>
        <dbReference type="ChEBI" id="CHEBI:57597"/>
    </ligand>
</feature>
<feature type="binding site" evidence="1">
    <location>
        <position position="12"/>
    </location>
    <ligand>
        <name>ATP</name>
        <dbReference type="ChEBI" id="CHEBI:30616"/>
    </ligand>
</feature>
<feature type="binding site" evidence="1">
    <location>
        <position position="13"/>
    </location>
    <ligand>
        <name>ATP</name>
        <dbReference type="ChEBI" id="CHEBI:30616"/>
    </ligand>
</feature>
<feature type="binding site" evidence="1">
    <location>
        <position position="15"/>
    </location>
    <ligand>
        <name>ADP</name>
        <dbReference type="ChEBI" id="CHEBI:456216"/>
    </ligand>
</feature>
<feature type="binding site" evidence="1">
    <location>
        <position position="81"/>
    </location>
    <ligand>
        <name>glycerol</name>
        <dbReference type="ChEBI" id="CHEBI:17754"/>
    </ligand>
</feature>
<feature type="binding site" evidence="1">
    <location>
        <position position="81"/>
    </location>
    <ligand>
        <name>sn-glycerol 3-phosphate</name>
        <dbReference type="ChEBI" id="CHEBI:57597"/>
    </ligand>
</feature>
<feature type="binding site" evidence="1">
    <location>
        <position position="82"/>
    </location>
    <ligand>
        <name>glycerol</name>
        <dbReference type="ChEBI" id="CHEBI:17754"/>
    </ligand>
</feature>
<feature type="binding site" evidence="1">
    <location>
        <position position="82"/>
    </location>
    <ligand>
        <name>sn-glycerol 3-phosphate</name>
        <dbReference type="ChEBI" id="CHEBI:57597"/>
    </ligand>
</feature>
<feature type="binding site" evidence="1">
    <location>
        <position position="133"/>
    </location>
    <ligand>
        <name>glycerol</name>
        <dbReference type="ChEBI" id="CHEBI:17754"/>
    </ligand>
</feature>
<feature type="binding site" evidence="1">
    <location>
        <position position="133"/>
    </location>
    <ligand>
        <name>sn-glycerol 3-phosphate</name>
        <dbReference type="ChEBI" id="CHEBI:57597"/>
    </ligand>
</feature>
<feature type="binding site" evidence="1">
    <location>
        <position position="242"/>
    </location>
    <ligand>
        <name>glycerol</name>
        <dbReference type="ChEBI" id="CHEBI:17754"/>
    </ligand>
</feature>
<feature type="binding site" evidence="1">
    <location>
        <position position="242"/>
    </location>
    <ligand>
        <name>sn-glycerol 3-phosphate</name>
        <dbReference type="ChEBI" id="CHEBI:57597"/>
    </ligand>
</feature>
<feature type="binding site" evidence="1">
    <location>
        <position position="243"/>
    </location>
    <ligand>
        <name>glycerol</name>
        <dbReference type="ChEBI" id="CHEBI:17754"/>
    </ligand>
</feature>
<feature type="binding site" evidence="1">
    <location>
        <position position="264"/>
    </location>
    <ligand>
        <name>ADP</name>
        <dbReference type="ChEBI" id="CHEBI:456216"/>
    </ligand>
</feature>
<feature type="binding site" evidence="1">
    <location>
        <position position="264"/>
    </location>
    <ligand>
        <name>ATP</name>
        <dbReference type="ChEBI" id="CHEBI:30616"/>
    </ligand>
</feature>
<feature type="binding site" evidence="1">
    <location>
        <position position="307"/>
    </location>
    <ligand>
        <name>ADP</name>
        <dbReference type="ChEBI" id="CHEBI:456216"/>
    </ligand>
</feature>
<feature type="binding site" evidence="1">
    <location>
        <position position="307"/>
    </location>
    <ligand>
        <name>ATP</name>
        <dbReference type="ChEBI" id="CHEBI:30616"/>
    </ligand>
</feature>
<feature type="binding site" evidence="1">
    <location>
        <position position="311"/>
    </location>
    <ligand>
        <name>ATP</name>
        <dbReference type="ChEBI" id="CHEBI:30616"/>
    </ligand>
</feature>
<feature type="binding site" evidence="1">
    <location>
        <position position="412"/>
    </location>
    <ligand>
        <name>ADP</name>
        <dbReference type="ChEBI" id="CHEBI:456216"/>
    </ligand>
</feature>
<feature type="binding site" evidence="1">
    <location>
        <position position="412"/>
    </location>
    <ligand>
        <name>ATP</name>
        <dbReference type="ChEBI" id="CHEBI:30616"/>
    </ligand>
</feature>
<feature type="binding site" evidence="1">
    <location>
        <position position="416"/>
    </location>
    <ligand>
        <name>ADP</name>
        <dbReference type="ChEBI" id="CHEBI:456216"/>
    </ligand>
</feature>
<keyword id="KW-0067">ATP-binding</keyword>
<keyword id="KW-0319">Glycerol metabolism</keyword>
<keyword id="KW-0418">Kinase</keyword>
<keyword id="KW-0547">Nucleotide-binding</keyword>
<keyword id="KW-1185">Reference proteome</keyword>
<keyword id="KW-0808">Transferase</keyword>
<proteinExistence type="inferred from homology"/>
<organism>
    <name type="scientific">Leptothrix cholodnii (strain ATCC 51168 / LMG 8142 / SP-6)</name>
    <name type="common">Leptothrix discophora (strain SP-6)</name>
    <dbReference type="NCBI Taxonomy" id="395495"/>
    <lineage>
        <taxon>Bacteria</taxon>
        <taxon>Pseudomonadati</taxon>
        <taxon>Pseudomonadota</taxon>
        <taxon>Betaproteobacteria</taxon>
        <taxon>Burkholderiales</taxon>
        <taxon>Sphaerotilaceae</taxon>
        <taxon>Leptothrix</taxon>
    </lineage>
</organism>
<comment type="function">
    <text evidence="1">Key enzyme in the regulation of glycerol uptake and metabolism. Catalyzes the phosphorylation of glycerol to yield sn-glycerol 3-phosphate.</text>
</comment>
<comment type="catalytic activity">
    <reaction evidence="1">
        <text>glycerol + ATP = sn-glycerol 3-phosphate + ADP + H(+)</text>
        <dbReference type="Rhea" id="RHEA:21644"/>
        <dbReference type="ChEBI" id="CHEBI:15378"/>
        <dbReference type="ChEBI" id="CHEBI:17754"/>
        <dbReference type="ChEBI" id="CHEBI:30616"/>
        <dbReference type="ChEBI" id="CHEBI:57597"/>
        <dbReference type="ChEBI" id="CHEBI:456216"/>
        <dbReference type="EC" id="2.7.1.30"/>
    </reaction>
</comment>
<comment type="activity regulation">
    <text evidence="1">Inhibited by fructose 1,6-bisphosphate (FBP).</text>
</comment>
<comment type="pathway">
    <text evidence="1">Polyol metabolism; glycerol degradation via glycerol kinase pathway; sn-glycerol 3-phosphate from glycerol: step 1/1.</text>
</comment>
<comment type="similarity">
    <text evidence="1">Belongs to the FGGY kinase family.</text>
</comment>
<dbReference type="EC" id="2.7.1.30" evidence="1"/>
<dbReference type="EMBL" id="CP001013">
    <property type="protein sequence ID" value="ACB35481.1"/>
    <property type="molecule type" value="Genomic_DNA"/>
</dbReference>
<dbReference type="RefSeq" id="WP_012348228.1">
    <property type="nucleotide sequence ID" value="NC_010524.1"/>
</dbReference>
<dbReference type="SMR" id="B1Y1L9"/>
<dbReference type="STRING" id="395495.Lcho_3223"/>
<dbReference type="KEGG" id="lch:Lcho_3223"/>
<dbReference type="eggNOG" id="COG0554">
    <property type="taxonomic scope" value="Bacteria"/>
</dbReference>
<dbReference type="HOGENOM" id="CLU_009281_2_3_4"/>
<dbReference type="OrthoDB" id="9805576at2"/>
<dbReference type="UniPathway" id="UPA00618">
    <property type="reaction ID" value="UER00672"/>
</dbReference>
<dbReference type="Proteomes" id="UP000001693">
    <property type="component" value="Chromosome"/>
</dbReference>
<dbReference type="GO" id="GO:0005829">
    <property type="term" value="C:cytosol"/>
    <property type="evidence" value="ECO:0007669"/>
    <property type="project" value="TreeGrafter"/>
</dbReference>
<dbReference type="GO" id="GO:0005524">
    <property type="term" value="F:ATP binding"/>
    <property type="evidence" value="ECO:0007669"/>
    <property type="project" value="UniProtKB-UniRule"/>
</dbReference>
<dbReference type="GO" id="GO:0004370">
    <property type="term" value="F:glycerol kinase activity"/>
    <property type="evidence" value="ECO:0000250"/>
    <property type="project" value="UniProtKB"/>
</dbReference>
<dbReference type="GO" id="GO:0019563">
    <property type="term" value="P:glycerol catabolic process"/>
    <property type="evidence" value="ECO:0007669"/>
    <property type="project" value="UniProtKB-UniRule"/>
</dbReference>
<dbReference type="GO" id="GO:0006071">
    <property type="term" value="P:glycerol metabolic process"/>
    <property type="evidence" value="ECO:0000250"/>
    <property type="project" value="UniProtKB"/>
</dbReference>
<dbReference type="GO" id="GO:0006072">
    <property type="term" value="P:glycerol-3-phosphate metabolic process"/>
    <property type="evidence" value="ECO:0007669"/>
    <property type="project" value="InterPro"/>
</dbReference>
<dbReference type="CDD" id="cd07786">
    <property type="entry name" value="FGGY_EcGK_like"/>
    <property type="match status" value="1"/>
</dbReference>
<dbReference type="FunFam" id="3.30.420.40:FF:000007">
    <property type="entry name" value="Glycerol kinase"/>
    <property type="match status" value="1"/>
</dbReference>
<dbReference type="FunFam" id="3.30.420.40:FF:000008">
    <property type="entry name" value="Glycerol kinase"/>
    <property type="match status" value="1"/>
</dbReference>
<dbReference type="Gene3D" id="3.30.420.40">
    <property type="match status" value="2"/>
</dbReference>
<dbReference type="HAMAP" id="MF_00186">
    <property type="entry name" value="Glycerol_kin"/>
    <property type="match status" value="1"/>
</dbReference>
<dbReference type="InterPro" id="IPR043129">
    <property type="entry name" value="ATPase_NBD"/>
</dbReference>
<dbReference type="InterPro" id="IPR000577">
    <property type="entry name" value="Carb_kinase_FGGY"/>
</dbReference>
<dbReference type="InterPro" id="IPR018483">
    <property type="entry name" value="Carb_kinase_FGGY_CS"/>
</dbReference>
<dbReference type="InterPro" id="IPR018485">
    <property type="entry name" value="FGGY_C"/>
</dbReference>
<dbReference type="InterPro" id="IPR018484">
    <property type="entry name" value="FGGY_N"/>
</dbReference>
<dbReference type="InterPro" id="IPR005999">
    <property type="entry name" value="Glycerol_kin"/>
</dbReference>
<dbReference type="NCBIfam" id="TIGR01311">
    <property type="entry name" value="glycerol_kin"/>
    <property type="match status" value="1"/>
</dbReference>
<dbReference type="NCBIfam" id="NF000756">
    <property type="entry name" value="PRK00047.1"/>
    <property type="match status" value="1"/>
</dbReference>
<dbReference type="PANTHER" id="PTHR10196:SF69">
    <property type="entry name" value="GLYCEROL KINASE"/>
    <property type="match status" value="1"/>
</dbReference>
<dbReference type="PANTHER" id="PTHR10196">
    <property type="entry name" value="SUGAR KINASE"/>
    <property type="match status" value="1"/>
</dbReference>
<dbReference type="Pfam" id="PF02782">
    <property type="entry name" value="FGGY_C"/>
    <property type="match status" value="1"/>
</dbReference>
<dbReference type="Pfam" id="PF00370">
    <property type="entry name" value="FGGY_N"/>
    <property type="match status" value="1"/>
</dbReference>
<dbReference type="PIRSF" id="PIRSF000538">
    <property type="entry name" value="GlpK"/>
    <property type="match status" value="1"/>
</dbReference>
<dbReference type="SUPFAM" id="SSF53067">
    <property type="entry name" value="Actin-like ATPase domain"/>
    <property type="match status" value="2"/>
</dbReference>
<dbReference type="PROSITE" id="PS00933">
    <property type="entry name" value="FGGY_KINASES_1"/>
    <property type="match status" value="1"/>
</dbReference>
<dbReference type="PROSITE" id="PS00445">
    <property type="entry name" value="FGGY_KINASES_2"/>
    <property type="match status" value="1"/>
</dbReference>
<gene>
    <name evidence="1" type="primary">glpK</name>
    <name type="ordered locus">Lcho_3223</name>
</gene>